<reference key="1">
    <citation type="journal article" date="2009" name="J. Bacteriol.">
        <title>Complete genome sequence and comparative genome analysis of enteropathogenic Escherichia coli O127:H6 strain E2348/69.</title>
        <authorList>
            <person name="Iguchi A."/>
            <person name="Thomson N.R."/>
            <person name="Ogura Y."/>
            <person name="Saunders D."/>
            <person name="Ooka T."/>
            <person name="Henderson I.R."/>
            <person name="Harris D."/>
            <person name="Asadulghani M."/>
            <person name="Kurokawa K."/>
            <person name="Dean P."/>
            <person name="Kenny B."/>
            <person name="Quail M.A."/>
            <person name="Thurston S."/>
            <person name="Dougan G."/>
            <person name="Hayashi T."/>
            <person name="Parkhill J."/>
            <person name="Frankel G."/>
        </authorList>
    </citation>
    <scope>NUCLEOTIDE SEQUENCE [LARGE SCALE GENOMIC DNA]</scope>
    <source>
        <strain>E2348/69 / EPEC</strain>
    </source>
</reference>
<sequence length="471" mass="52773">MENFKHLPEPFRIRVIEPVKRTTRAYREEAIIKSGMNPFLLDSEDVFIDLLTDSGTGAVTQSMQAAMMRGDEAYSGSRSYYALAESVKNIFGYQYTIPTHQGRGAEQIYIPVLIKKREQEKGLDRSKMVAFSNYFFDTTQGHSQINGCTVRNVYIKEAFDTGVRYDFKGNFDLEGLERGIEEVGPNNVPYIVATITSNSAGGQPVSLANLKAMYSIAKKYDIPVVMDSARFAENAYFIKQREAEYKDWTIEQITRETYKYADMLAMSAKKDAMVPMGGLLCMKDDSFFDVYTECRTLCVVQEGFPTYGGLEGGAMERLAVGLYDGMNLDWLAYRIAQVQYLVDGLEEIGVVCQQAGGHAAFVDAGKLLPHIPADQFPAQALACELYKVAGIRAVEIGSFLLGRDPKTGKQLPCPAELLRLTIPRATYTQTHMDFIIEAFKHVKENAANIKGLTFTYEPKVLRHFTAKLKEV</sequence>
<accession>B7UMH5</accession>
<name>TNAA_ECO27</name>
<proteinExistence type="inferred from homology"/>
<organism>
    <name type="scientific">Escherichia coli O127:H6 (strain E2348/69 / EPEC)</name>
    <dbReference type="NCBI Taxonomy" id="574521"/>
    <lineage>
        <taxon>Bacteria</taxon>
        <taxon>Pseudomonadati</taxon>
        <taxon>Pseudomonadota</taxon>
        <taxon>Gammaproteobacteria</taxon>
        <taxon>Enterobacterales</taxon>
        <taxon>Enterobacteriaceae</taxon>
        <taxon>Escherichia</taxon>
    </lineage>
</organism>
<comment type="catalytic activity">
    <reaction evidence="1">
        <text>L-tryptophan + H2O = indole + pyruvate + NH4(+)</text>
        <dbReference type="Rhea" id="RHEA:19553"/>
        <dbReference type="ChEBI" id="CHEBI:15361"/>
        <dbReference type="ChEBI" id="CHEBI:15377"/>
        <dbReference type="ChEBI" id="CHEBI:16881"/>
        <dbReference type="ChEBI" id="CHEBI:28938"/>
        <dbReference type="ChEBI" id="CHEBI:57912"/>
        <dbReference type="EC" id="4.1.99.1"/>
    </reaction>
</comment>
<comment type="cofactor">
    <cofactor evidence="1">
        <name>pyridoxal 5'-phosphate</name>
        <dbReference type="ChEBI" id="CHEBI:597326"/>
    </cofactor>
</comment>
<comment type="pathway">
    <text evidence="1">Amino-acid degradation; L-tryptophan degradation via pyruvate pathway; indole and pyruvate from L-tryptophan: step 1/1.</text>
</comment>
<comment type="subunit">
    <text evidence="1">Homotetramer.</text>
</comment>
<comment type="similarity">
    <text evidence="1">Belongs to the beta-eliminating lyase family.</text>
</comment>
<dbReference type="EC" id="4.1.99.1" evidence="1"/>
<dbReference type="EMBL" id="FM180568">
    <property type="protein sequence ID" value="CAS11567.1"/>
    <property type="molecule type" value="Genomic_DNA"/>
</dbReference>
<dbReference type="RefSeq" id="WP_001295247.1">
    <property type="nucleotide sequence ID" value="NC_011601.1"/>
</dbReference>
<dbReference type="SMR" id="B7UMH5"/>
<dbReference type="GeneID" id="75205423"/>
<dbReference type="KEGG" id="ecg:E2348C_4019"/>
<dbReference type="HOGENOM" id="CLU_047223_0_0_6"/>
<dbReference type="UniPathway" id="UPA00332">
    <property type="reaction ID" value="UER00452"/>
</dbReference>
<dbReference type="Proteomes" id="UP000008205">
    <property type="component" value="Chromosome"/>
</dbReference>
<dbReference type="GO" id="GO:0009034">
    <property type="term" value="F:tryptophanase activity"/>
    <property type="evidence" value="ECO:0007669"/>
    <property type="project" value="UniProtKB-UniRule"/>
</dbReference>
<dbReference type="FunFam" id="3.40.640.10:FF:000039">
    <property type="entry name" value="Tryptophanase"/>
    <property type="match status" value="1"/>
</dbReference>
<dbReference type="Gene3D" id="3.90.1150.10">
    <property type="entry name" value="Aspartate Aminotransferase, domain 1"/>
    <property type="match status" value="1"/>
</dbReference>
<dbReference type="Gene3D" id="3.40.640.10">
    <property type="entry name" value="Type I PLP-dependent aspartate aminotransferase-like (Major domain)"/>
    <property type="match status" value="1"/>
</dbReference>
<dbReference type="HAMAP" id="MF_00544">
    <property type="entry name" value="Tryptophanase"/>
    <property type="match status" value="1"/>
</dbReference>
<dbReference type="InterPro" id="IPR001597">
    <property type="entry name" value="ArAA_b-elim_lyase/Thr_aldolase"/>
</dbReference>
<dbReference type="InterPro" id="IPR011166">
    <property type="entry name" value="Beta-eliminating_lyase"/>
</dbReference>
<dbReference type="InterPro" id="IPR015424">
    <property type="entry name" value="PyrdxlP-dep_Trfase"/>
</dbReference>
<dbReference type="InterPro" id="IPR015421">
    <property type="entry name" value="PyrdxlP-dep_Trfase_major"/>
</dbReference>
<dbReference type="InterPro" id="IPR015422">
    <property type="entry name" value="PyrdxlP-dep_Trfase_small"/>
</dbReference>
<dbReference type="InterPro" id="IPR013440">
    <property type="entry name" value="TNase"/>
</dbReference>
<dbReference type="InterPro" id="IPR018176">
    <property type="entry name" value="Tryptophanase_CS"/>
</dbReference>
<dbReference type="NCBIfam" id="NF009709">
    <property type="entry name" value="PRK13238.1"/>
    <property type="match status" value="1"/>
</dbReference>
<dbReference type="NCBIfam" id="TIGR02617">
    <property type="entry name" value="tnaA_trp_ase"/>
    <property type="match status" value="1"/>
</dbReference>
<dbReference type="PANTHER" id="PTHR32325">
    <property type="entry name" value="BETA-ELIMINATING LYASE-LIKE PROTEIN-RELATED"/>
    <property type="match status" value="1"/>
</dbReference>
<dbReference type="PANTHER" id="PTHR32325:SF4">
    <property type="entry name" value="TRYPTOPHANASE"/>
    <property type="match status" value="1"/>
</dbReference>
<dbReference type="Pfam" id="PF01212">
    <property type="entry name" value="Beta_elim_lyase"/>
    <property type="match status" value="1"/>
</dbReference>
<dbReference type="PIRSF" id="PIRSF001386">
    <property type="entry name" value="Trpase"/>
    <property type="match status" value="1"/>
</dbReference>
<dbReference type="SUPFAM" id="SSF53383">
    <property type="entry name" value="PLP-dependent transferases"/>
    <property type="match status" value="1"/>
</dbReference>
<dbReference type="PROSITE" id="PS00853">
    <property type="entry name" value="BETA_ELIM_LYASE"/>
    <property type="match status" value="1"/>
</dbReference>
<gene>
    <name evidence="1" type="primary">tnaA</name>
    <name type="ordered locus">E2348C_4019</name>
</gene>
<keyword id="KW-0007">Acetylation</keyword>
<keyword id="KW-0456">Lyase</keyword>
<keyword id="KW-0663">Pyridoxal phosphate</keyword>
<keyword id="KW-1185">Reference proteome</keyword>
<keyword id="KW-0823">Tryptophan catabolism</keyword>
<protein>
    <recommendedName>
        <fullName evidence="1">Tryptophanase</fullName>
        <ecNumber evidence="1">4.1.99.1</ecNumber>
    </recommendedName>
    <alternativeName>
        <fullName evidence="1">L-tryptophan indole-lyase</fullName>
        <shortName evidence="1">TNase</shortName>
    </alternativeName>
</protein>
<feature type="chain" id="PRO_1000146591" description="Tryptophanase">
    <location>
        <begin position="1"/>
        <end position="471"/>
    </location>
</feature>
<feature type="modified residue" description="N6-acetyllysine" evidence="1">
    <location>
        <position position="5"/>
    </location>
</feature>
<feature type="modified residue" description="N6-acetyllysine" evidence="1">
    <location>
        <position position="115"/>
    </location>
</feature>
<feature type="modified residue" description="N6-acetyllysine" evidence="1">
    <location>
        <position position="156"/>
    </location>
</feature>
<feature type="modified residue" description="N6-(pyridoxal phosphate)lysine" evidence="1">
    <location>
        <position position="270"/>
    </location>
</feature>
<feature type="modified residue" description="N6-acetyllysine" evidence="1">
    <location>
        <position position="450"/>
    </location>
</feature>
<evidence type="ECO:0000255" key="1">
    <source>
        <dbReference type="HAMAP-Rule" id="MF_00544"/>
    </source>
</evidence>